<protein>
    <recommendedName>
        <fullName evidence="8">Dihydrofolate synthase/folylpolyglutamate synthase</fullName>
        <shortName evidence="5">DHFS / FPGS</shortName>
        <ecNumber evidence="2 3 4">6.3.2.12</ecNumber>
        <ecNumber evidence="2">6.3.2.17</ecNumber>
    </recommendedName>
    <alternativeName>
        <fullName evidence="7">Folylpoly-gamma-glutamate synthetase-dihydrofolate synthetase</fullName>
    </alternativeName>
    <alternativeName>
        <fullName evidence="6">Folylpolyglutamate synthetase</fullName>
    </alternativeName>
    <alternativeName>
        <fullName>Tetrahydrofolylpolyglutamate synthase</fullName>
    </alternativeName>
</protein>
<name>FOLC_ECOLI</name>
<evidence type="ECO:0000269" key="1">
    <source>
    </source>
</evidence>
<evidence type="ECO:0000269" key="2">
    <source>
    </source>
</evidence>
<evidence type="ECO:0000269" key="3">
    <source>
    </source>
</evidence>
<evidence type="ECO:0000269" key="4">
    <source>
    </source>
</evidence>
<evidence type="ECO:0000303" key="5">
    <source>
    </source>
</evidence>
<evidence type="ECO:0000303" key="6">
    <source>
    </source>
</evidence>
<evidence type="ECO:0000303" key="7">
    <source>
    </source>
</evidence>
<evidence type="ECO:0000305" key="8"/>
<evidence type="ECO:0000305" key="9">
    <source>
    </source>
</evidence>
<evidence type="ECO:0000305" key="10">
    <source>
    </source>
</evidence>
<evidence type="ECO:0007744" key="11">
    <source>
        <dbReference type="PDB" id="1W78"/>
    </source>
</evidence>
<evidence type="ECO:0007744" key="12">
    <source>
        <dbReference type="PDB" id="1W7K"/>
    </source>
</evidence>
<evidence type="ECO:0007829" key="13">
    <source>
        <dbReference type="PDB" id="1W78"/>
    </source>
</evidence>
<accession>P08192</accession>
<accession>P78237</accession>
<feature type="chain" id="PRO_0000168303" description="Dihydrofolate synthase/folylpolyglutamate synthase">
    <location>
        <begin position="1"/>
        <end position="422"/>
    </location>
</feature>
<feature type="binding site" evidence="9 11">
    <location>
        <begin position="29"/>
        <end position="31"/>
    </location>
    <ligand>
        <name>7,8-dihydropteroate</name>
        <dbReference type="ChEBI" id="CHEBI:17839"/>
    </ligand>
</feature>
<feature type="binding site" evidence="9 11 12">
    <location>
        <begin position="59"/>
        <end position="62"/>
    </location>
    <ligand>
        <name>ATP</name>
        <dbReference type="ChEBI" id="CHEBI:30616"/>
    </ligand>
</feature>
<feature type="binding site" evidence="1">
    <location>
        <position position="83"/>
    </location>
    <ligand>
        <name>Mg(2+)</name>
        <dbReference type="ChEBI" id="CHEBI:18420"/>
        <label>1</label>
    </ligand>
</feature>
<feature type="binding site" evidence="9 11">
    <location>
        <begin position="122"/>
        <end position="125"/>
    </location>
    <ligand>
        <name>7,8-dihydropteroate</name>
        <dbReference type="ChEBI" id="CHEBI:17839"/>
    </ligand>
</feature>
<feature type="binding site" evidence="1">
    <location>
        <position position="146"/>
    </location>
    <ligand>
        <name>Mg(2+)</name>
        <dbReference type="ChEBI" id="CHEBI:18420"/>
        <label>1</label>
    </ligand>
</feature>
<feature type="binding site" evidence="9 11">
    <location>
        <begin position="153"/>
        <end position="155"/>
    </location>
    <ligand>
        <name>7,8-dihydropteroate</name>
        <dbReference type="ChEBI" id="CHEBI:17839"/>
    </ligand>
</feature>
<feature type="binding site" evidence="1">
    <location>
        <position position="173"/>
    </location>
    <ligand>
        <name>Mg(2+)</name>
        <dbReference type="ChEBI" id="CHEBI:18420"/>
        <label>2</label>
    </ligand>
</feature>
<feature type="binding site" evidence="9 11 12">
    <location>
        <position position="257"/>
    </location>
    <ligand>
        <name>ATP</name>
        <dbReference type="ChEBI" id="CHEBI:30616"/>
    </ligand>
</feature>
<feature type="binding site" evidence="9 11 12">
    <location>
        <position position="289"/>
    </location>
    <ligand>
        <name>ATP</name>
        <dbReference type="ChEBI" id="CHEBI:30616"/>
    </ligand>
</feature>
<feature type="binding site" evidence="9 11 12">
    <location>
        <position position="302"/>
    </location>
    <ligand>
        <name>ATP</name>
        <dbReference type="ChEBI" id="CHEBI:30616"/>
    </ligand>
</feature>
<feature type="modified residue" description="N6-carboxylysine" evidence="1">
    <location>
        <position position="188"/>
    </location>
</feature>
<feature type="mutagenesis site" description="Causes large decrease in affinity for both THF and DHP." evidence="2">
    <original>T</original>
    <variation>H</variation>
    <variation>W</variation>
    <location>
        <position position="122"/>
    </location>
</feature>
<feature type="mutagenesis site" description="Severely impairs activity with THF as substrate, even more so than with DHP. Both substrates show a reduced affinity, but the catalytic rate with THF is 23-fold lower than wild-type, whereas that with DHP is 2.5-fold lower. The catalytic rate with THF diglutamate is 10-fold higher than with monoglutamate and close to that of the wild-type enzyme." evidence="2">
    <original>D</original>
    <variation>A</variation>
    <location>
        <position position="154"/>
    </location>
</feature>
<feature type="mutagenesis site" description="Causes large decrease in affinity for both THF and DHP." evidence="2">
    <original>A</original>
    <variation>H</variation>
    <location>
        <position position="155"/>
    </location>
</feature>
<feature type="sequence conflict" description="In Ref. 1; AAA23808/AAA23802." evidence="8" ref="1">
    <original>V</original>
    <variation>M</variation>
    <location>
        <position position="326"/>
    </location>
</feature>
<feature type="sequence conflict" description="In Ref. 2; AAA23966." evidence="8" ref="2">
    <original>A</original>
    <variation>AA</variation>
    <location>
        <position position="328"/>
    </location>
</feature>
<feature type="sequence conflict" description="In Ref. 2; AAA23966." evidence="8" ref="2">
    <original>DA</original>
    <variation>EP</variation>
    <location>
        <begin position="391"/>
        <end position="392"/>
    </location>
</feature>
<feature type="helix" evidence="13">
    <location>
        <begin position="13"/>
        <end position="20"/>
    </location>
</feature>
<feature type="strand" evidence="13">
    <location>
        <begin position="23"/>
        <end position="27"/>
    </location>
</feature>
<feature type="helix" evidence="13">
    <location>
        <begin position="33"/>
        <end position="42"/>
    </location>
</feature>
<feature type="strand" evidence="13">
    <location>
        <begin position="48"/>
        <end position="55"/>
    </location>
</feature>
<feature type="helix" evidence="13">
    <location>
        <begin position="60"/>
        <end position="73"/>
    </location>
</feature>
<feature type="strand" evidence="13">
    <location>
        <begin position="78"/>
        <end position="81"/>
    </location>
</feature>
<feature type="helix" evidence="13">
    <location>
        <begin position="89"/>
        <end position="92"/>
    </location>
</feature>
<feature type="strand" evidence="13">
    <location>
        <begin position="93"/>
        <end position="95"/>
    </location>
</feature>
<feature type="helix" evidence="13">
    <location>
        <begin position="102"/>
        <end position="115"/>
    </location>
</feature>
<feature type="turn" evidence="13">
    <location>
        <begin position="116"/>
        <end position="118"/>
    </location>
</feature>
<feature type="helix" evidence="13">
    <location>
        <begin position="123"/>
        <end position="138"/>
    </location>
</feature>
<feature type="strand" evidence="13">
    <location>
        <begin position="141"/>
        <end position="146"/>
    </location>
</feature>
<feature type="strand" evidence="13">
    <location>
        <begin position="148"/>
        <end position="151"/>
    </location>
</feature>
<feature type="helix" evidence="13">
    <location>
        <begin position="155"/>
        <end position="158"/>
    </location>
</feature>
<feature type="strand" evidence="13">
    <location>
        <begin position="162"/>
        <end position="166"/>
    </location>
</feature>
<feature type="helix" evidence="13">
    <location>
        <begin position="174"/>
        <end position="177"/>
    </location>
</feature>
<feature type="helix" evidence="13">
    <location>
        <begin position="181"/>
        <end position="188"/>
    </location>
</feature>
<feature type="helix" evidence="13">
    <location>
        <begin position="189"/>
        <end position="191"/>
    </location>
</feature>
<feature type="strand" evidence="13">
    <location>
        <begin position="196"/>
        <end position="200"/>
    </location>
</feature>
<feature type="helix" evidence="13">
    <location>
        <begin position="207"/>
        <end position="216"/>
    </location>
</feature>
<feature type="strand" evidence="13">
    <location>
        <begin position="219"/>
        <end position="223"/>
    </location>
</feature>
<feature type="turn" evidence="13">
    <location>
        <begin position="224"/>
        <end position="226"/>
    </location>
</feature>
<feature type="strand" evidence="13">
    <location>
        <begin position="227"/>
        <end position="231"/>
    </location>
</feature>
<feature type="strand" evidence="13">
    <location>
        <begin position="236"/>
        <end position="240"/>
    </location>
</feature>
<feature type="strand" evidence="13">
    <location>
        <begin position="243"/>
        <end position="248"/>
    </location>
</feature>
<feature type="helix" evidence="13">
    <location>
        <begin position="255"/>
        <end position="268"/>
    </location>
</feature>
<feature type="helix" evidence="13">
    <location>
        <begin position="274"/>
        <end position="283"/>
    </location>
</feature>
<feature type="strand" evidence="13">
    <location>
        <begin position="289"/>
        <end position="294"/>
    </location>
</feature>
<feature type="turn" evidence="13">
    <location>
        <begin position="295"/>
        <end position="297"/>
    </location>
</feature>
<feature type="strand" evidence="13">
    <location>
        <begin position="298"/>
        <end position="302"/>
    </location>
</feature>
<feature type="helix" evidence="13">
    <location>
        <begin position="307"/>
        <end position="319"/>
    </location>
</feature>
<feature type="strand" evidence="13">
    <location>
        <begin position="326"/>
        <end position="330"/>
    </location>
</feature>
<feature type="helix" evidence="13">
    <location>
        <begin position="338"/>
        <end position="346"/>
    </location>
</feature>
<feature type="strand" evidence="13">
    <location>
        <begin position="350"/>
        <end position="354"/>
    </location>
</feature>
<feature type="strand" evidence="13">
    <location>
        <begin position="359"/>
        <end position="362"/>
    </location>
</feature>
<feature type="helix" evidence="13">
    <location>
        <begin position="365"/>
        <end position="372"/>
    </location>
</feature>
<feature type="helix" evidence="13">
    <location>
        <begin position="381"/>
        <end position="391"/>
    </location>
</feature>
<feature type="strand" evidence="13">
    <location>
        <begin position="397"/>
        <end position="403"/>
    </location>
</feature>
<feature type="helix" evidence="13">
    <location>
        <begin position="404"/>
        <end position="417"/>
    </location>
</feature>
<proteinExistence type="evidence at protein level"/>
<comment type="function">
    <text evidence="2 3 4">Functions in two distinct reactions of the de novo folate biosynthetic pathway. Catalyzes the addition of a glutamate residue to dihydropteroate (7,8-dihydropteroate or H2Pte) to form dihydrofolate (7,8-dihydrofolate monoglutamate or H2Pte-Glu). Also catalyzes successive additions of L-glutamate to tetrahydrofolate or 10-formyltetrahydrofolate or 5,10-methylenetetrahydrofolate, leading to folylpolyglutamate derivatives.</text>
</comment>
<comment type="catalytic activity">
    <reaction evidence="2 3 4">
        <text>7,8-dihydropteroate + L-glutamate + ATP = 7,8-dihydrofolate + ADP + phosphate + H(+)</text>
        <dbReference type="Rhea" id="RHEA:23584"/>
        <dbReference type="ChEBI" id="CHEBI:15378"/>
        <dbReference type="ChEBI" id="CHEBI:17839"/>
        <dbReference type="ChEBI" id="CHEBI:29985"/>
        <dbReference type="ChEBI" id="CHEBI:30616"/>
        <dbReference type="ChEBI" id="CHEBI:43474"/>
        <dbReference type="ChEBI" id="CHEBI:57451"/>
        <dbReference type="ChEBI" id="CHEBI:456216"/>
        <dbReference type="EC" id="6.3.2.12"/>
    </reaction>
</comment>
<comment type="catalytic activity">
    <reaction evidence="2">
        <text>(6S)-5,6,7,8-tetrahydrofolyl-(gamma-L-Glu)(n) + L-glutamate + ATP = (6S)-5,6,7,8-tetrahydrofolyl-(gamma-L-Glu)(n+1) + ADP + phosphate + H(+)</text>
        <dbReference type="Rhea" id="RHEA:10580"/>
        <dbReference type="Rhea" id="RHEA-COMP:14738"/>
        <dbReference type="Rhea" id="RHEA-COMP:14740"/>
        <dbReference type="ChEBI" id="CHEBI:15378"/>
        <dbReference type="ChEBI" id="CHEBI:29985"/>
        <dbReference type="ChEBI" id="CHEBI:30616"/>
        <dbReference type="ChEBI" id="CHEBI:43474"/>
        <dbReference type="ChEBI" id="CHEBI:141005"/>
        <dbReference type="ChEBI" id="CHEBI:456216"/>
        <dbReference type="EC" id="6.3.2.17"/>
    </reaction>
</comment>
<comment type="catalytic activity">
    <reaction evidence="3 4">
        <text>10-formyltetrahydrofolyl-(gamma-L-Glu)(n) + L-glutamate + ATP = 10-formyltetrahydrofolyl-(gamma-L-Glu)(n+1) + ADP + phosphate + H(+)</text>
        <dbReference type="Rhea" id="RHEA:51904"/>
        <dbReference type="Rhea" id="RHEA-COMP:13088"/>
        <dbReference type="Rhea" id="RHEA-COMP:14300"/>
        <dbReference type="ChEBI" id="CHEBI:15378"/>
        <dbReference type="ChEBI" id="CHEBI:29985"/>
        <dbReference type="ChEBI" id="CHEBI:30616"/>
        <dbReference type="ChEBI" id="CHEBI:43474"/>
        <dbReference type="ChEBI" id="CHEBI:134413"/>
        <dbReference type="ChEBI" id="CHEBI:456216"/>
        <dbReference type="EC" id="6.3.2.17"/>
    </reaction>
</comment>
<comment type="catalytic activity">
    <reaction evidence="2">
        <text>(6R)-5,10-methylenetetrahydrofolyl-(gamma-L-Glu)(n) + L-glutamate + ATP = (6R)-5,10-methylenetetrahydrofolyl-(gamma-L-Glu)(n+1) + ADP + phosphate + H(+)</text>
        <dbReference type="Rhea" id="RHEA:51912"/>
        <dbReference type="Rhea" id="RHEA-COMP:13257"/>
        <dbReference type="Rhea" id="RHEA-COMP:13258"/>
        <dbReference type="ChEBI" id="CHEBI:15378"/>
        <dbReference type="ChEBI" id="CHEBI:29985"/>
        <dbReference type="ChEBI" id="CHEBI:30616"/>
        <dbReference type="ChEBI" id="CHEBI:43474"/>
        <dbReference type="ChEBI" id="CHEBI:136572"/>
        <dbReference type="ChEBI" id="CHEBI:456216"/>
        <dbReference type="EC" id="6.3.2.17"/>
    </reaction>
</comment>
<comment type="cofactor">
    <cofactor evidence="9">
        <name>Mg(2+)</name>
        <dbReference type="ChEBI" id="CHEBI:18420"/>
    </cofactor>
    <text evidence="1">Binds 2 Mg(2+) ions per subunit.</text>
</comment>
<comment type="biophysicochemical properties">
    <kinetics>
        <KM evidence="4">0.6 uM for 7,8-dihydropteroate</KM>
        <KM evidence="4">6.9 uM for ATP (in the assay for DHFS activity)</KM>
        <KM evidence="4">3.9 mM for glutamate (in the assay for DHFS activity)</KM>
        <KM evidence="4">0.6 uM for (6RS)-10-formyl-tetrahydropteroyl-gamma-Glu</KM>
        <KM evidence="4">66.5 uM for ATP (in the assay for FPGS activity)</KM>
        <KM evidence="4">333 uM for glutamate (in the assay for FPGS activity)</KM>
        <KM evidence="3">0.9 uM for 7,8-dihydropteroate</KM>
        <KM evidence="3">10 uM for ATP (in the assay for DHFS activity)</KM>
        <KM evidence="3">2.8 mM for glutamate (in the assay for DHFS activity)</KM>
        <KM evidence="3">17 uM for 10-formyl-tetrahydropteroyl-gamma-Glu</KM>
        <KM evidence="3">54 uM for ATP (in the assay for FPGS activity)</KM>
        <KM evidence="3">300 uM for glutamate (in the assay for FPGS activity)</KM>
        <KM evidence="2">6.3 uM for 7,8-dihydropteroate</KM>
        <KM evidence="2">50 uM for 5,10-methylenetetrahydrofolate</KM>
        <KM evidence="2">50 uM for tetrahydrofolate</KM>
        <KM evidence="2">1.4 uM for tetrahydrofolate diglutamate</KM>
        <Vmax evidence="3">1.1 umol/h/mg enzyme for DHFS activity</Vmax>
        <Vmax evidence="3">4.1 umol/h/mg enzyme for FPGS activity with 10-formyl-tetrahydropteroyl-gamma-Glu as substrate</Vmax>
        <Vmax evidence="2">415.0 umol/h/mg enzyme for FPGS activity with tetrahydrofolate as substrate</Vmax>
        <Vmax evidence="2">380.0 umol/h/mg enzyme for FPGS activity with tetrahydrofolate diglutamate as substrate</Vmax>
        <Vmax evidence="2">13.0 umol/h/mg enzyme for DHFS activity</Vmax>
        <text evidence="4">kcat is 25 min(-1) with 7,8-dihydropteroate as substrate (at 30 degrees Celsius).</text>
    </kinetics>
</comment>
<comment type="pathway">
    <text evidence="10">Cofactor biosynthesis; tetrahydrofolate biosynthesis; 7,8-dihydrofolate from 2-amino-4-hydroxy-6-hydroxymethyl-7,8-dihydropteridine diphosphate and 4-aminobenzoate: step 2/2.</text>
</comment>
<comment type="pathway">
    <text evidence="10">Cofactor biosynthesis; tetrahydrofolylpolyglutamate biosynthesis.</text>
</comment>
<comment type="subunit">
    <text evidence="4">Monomer.</text>
</comment>
<comment type="domain">
    <text evidence="2">The N-terminal domain alone (residues 1-287) is sufficient to bind both tetrahydrofolate and dihydropteroate with the same affinity as the intact enzyme, but is not able to bind ATP and has no enzymatic activity.</text>
</comment>
<comment type="miscellaneous">
    <text evidence="2 3">Mutant studies have shown that dihydrofolate synthase and folylpolyglutamate synthetase activities are catalyzed by a single catalytic site.</text>
</comment>
<comment type="similarity">
    <text evidence="8">Belongs to the folylpolyglutamate synthase family.</text>
</comment>
<organism>
    <name type="scientific">Escherichia coli (strain K12)</name>
    <dbReference type="NCBI Taxonomy" id="83333"/>
    <lineage>
        <taxon>Bacteria</taxon>
        <taxon>Pseudomonadati</taxon>
        <taxon>Pseudomonadota</taxon>
        <taxon>Gammaproteobacteria</taxon>
        <taxon>Enterobacterales</taxon>
        <taxon>Enterobacteriaceae</taxon>
        <taxon>Escherichia</taxon>
    </lineage>
</organism>
<keyword id="KW-0002">3D-structure</keyword>
<keyword id="KW-0067">ATP-binding</keyword>
<keyword id="KW-0289">Folate biosynthesis</keyword>
<keyword id="KW-0436">Ligase</keyword>
<keyword id="KW-0460">Magnesium</keyword>
<keyword id="KW-0479">Metal-binding</keyword>
<keyword id="KW-0547">Nucleotide-binding</keyword>
<keyword id="KW-0554">One-carbon metabolism</keyword>
<keyword id="KW-1185">Reference proteome</keyword>
<dbReference type="EC" id="6.3.2.12" evidence="2 3 4"/>
<dbReference type="EC" id="6.3.2.17" evidence="2"/>
<dbReference type="EMBL" id="M32445">
    <property type="protein sequence ID" value="AAA23808.1"/>
    <property type="molecule type" value="Genomic_DNA"/>
</dbReference>
<dbReference type="EMBL" id="J02808">
    <property type="protein sequence ID" value="AAA23802.1"/>
    <property type="molecule type" value="Genomic_DNA"/>
</dbReference>
<dbReference type="EMBL" id="AH000881">
    <property type="protein sequence ID" value="AAA23966.1"/>
    <property type="molecule type" value="Genomic_DNA"/>
</dbReference>
<dbReference type="EMBL" id="U00096">
    <property type="protein sequence ID" value="AAC75375.1"/>
    <property type="molecule type" value="Genomic_DNA"/>
</dbReference>
<dbReference type="EMBL" id="AP009048">
    <property type="protein sequence ID" value="BAA16164.1"/>
    <property type="molecule type" value="Genomic_DNA"/>
</dbReference>
<dbReference type="PIR" id="A65004">
    <property type="entry name" value="SYECFG"/>
</dbReference>
<dbReference type="RefSeq" id="NP_416818.1">
    <property type="nucleotide sequence ID" value="NC_000913.3"/>
</dbReference>
<dbReference type="RefSeq" id="WP_000584546.1">
    <property type="nucleotide sequence ID" value="NZ_LN832404.1"/>
</dbReference>
<dbReference type="PDB" id="1W78">
    <property type="method" value="X-ray"/>
    <property type="resolution" value="1.82 A"/>
    <property type="chains" value="A=1-422"/>
</dbReference>
<dbReference type="PDB" id="1W7K">
    <property type="method" value="X-ray"/>
    <property type="resolution" value="2.10 A"/>
    <property type="chains" value="A=1-422"/>
</dbReference>
<dbReference type="PDBsum" id="1W78"/>
<dbReference type="PDBsum" id="1W7K"/>
<dbReference type="SMR" id="P08192"/>
<dbReference type="BioGRID" id="4261362">
    <property type="interactions" value="423"/>
</dbReference>
<dbReference type="DIP" id="DIP-9674N"/>
<dbReference type="FunCoup" id="P08192">
    <property type="interactions" value="876"/>
</dbReference>
<dbReference type="IntAct" id="P08192">
    <property type="interactions" value="10"/>
</dbReference>
<dbReference type="STRING" id="511145.b2315"/>
<dbReference type="BindingDB" id="P08192"/>
<dbReference type="ChEMBL" id="CHEMBL3309008"/>
<dbReference type="DrugBank" id="DB02437">
    <property type="generic name" value="(5r)-5-Amino-6-Hydroxyhexylcarbamic Acid"/>
</dbReference>
<dbReference type="DrugBank" id="DB03830">
    <property type="generic name" value="Phosphorylated Dihydropteroate"/>
</dbReference>
<dbReference type="DrugCentral" id="P08192"/>
<dbReference type="jPOST" id="P08192"/>
<dbReference type="PaxDb" id="511145-b2315"/>
<dbReference type="EnsemblBacteria" id="AAC75375">
    <property type="protein sequence ID" value="AAC75375"/>
    <property type="gene ID" value="b2315"/>
</dbReference>
<dbReference type="GeneID" id="945451"/>
<dbReference type="KEGG" id="ecj:JW2312"/>
<dbReference type="KEGG" id="eco:b2315"/>
<dbReference type="KEGG" id="ecoc:C3026_12905"/>
<dbReference type="PATRIC" id="fig|511145.12.peg.2410"/>
<dbReference type="EchoBASE" id="EB0323"/>
<dbReference type="eggNOG" id="COG0285">
    <property type="taxonomic scope" value="Bacteria"/>
</dbReference>
<dbReference type="HOGENOM" id="CLU_015869_1_0_6"/>
<dbReference type="InParanoid" id="P08192"/>
<dbReference type="OMA" id="NENYLVY"/>
<dbReference type="OrthoDB" id="9809356at2"/>
<dbReference type="PhylomeDB" id="P08192"/>
<dbReference type="BioCyc" id="EcoCyc:FOLC-MONOMER"/>
<dbReference type="BioCyc" id="MetaCyc:FOLC-MONOMER"/>
<dbReference type="BRENDA" id="6.3.2.17">
    <property type="organism ID" value="2026"/>
</dbReference>
<dbReference type="SABIO-RK" id="P08192"/>
<dbReference type="UniPathway" id="UPA00077">
    <property type="reaction ID" value="UER00157"/>
</dbReference>
<dbReference type="UniPathway" id="UPA00850"/>
<dbReference type="EvolutionaryTrace" id="P08192"/>
<dbReference type="PRO" id="PR:P08192"/>
<dbReference type="Proteomes" id="UP000000625">
    <property type="component" value="Chromosome"/>
</dbReference>
<dbReference type="GO" id="GO:0005737">
    <property type="term" value="C:cytoplasm"/>
    <property type="evidence" value="ECO:0000314"/>
    <property type="project" value="EcoCyc"/>
</dbReference>
<dbReference type="GO" id="GO:0005524">
    <property type="term" value="F:ATP binding"/>
    <property type="evidence" value="ECO:0007669"/>
    <property type="project" value="UniProtKB-KW"/>
</dbReference>
<dbReference type="GO" id="GO:0008841">
    <property type="term" value="F:dihydrofolate synthase activity"/>
    <property type="evidence" value="ECO:0000314"/>
    <property type="project" value="EcoCyc"/>
</dbReference>
<dbReference type="GO" id="GO:0097216">
    <property type="term" value="F:guanosine tetraphosphate binding"/>
    <property type="evidence" value="ECO:0000314"/>
    <property type="project" value="EcoCyc"/>
</dbReference>
<dbReference type="GO" id="GO:0046872">
    <property type="term" value="F:metal ion binding"/>
    <property type="evidence" value="ECO:0007669"/>
    <property type="project" value="UniProtKB-KW"/>
</dbReference>
<dbReference type="GO" id="GO:0004326">
    <property type="term" value="F:tetrahydrofolylpolyglutamate synthase activity"/>
    <property type="evidence" value="ECO:0000314"/>
    <property type="project" value="EcoCyc"/>
</dbReference>
<dbReference type="GO" id="GO:0009257">
    <property type="term" value="P:10-formyltetrahydrofolate biosynthetic process"/>
    <property type="evidence" value="ECO:0000269"/>
    <property type="project" value="EcoCyc"/>
</dbReference>
<dbReference type="GO" id="GO:0006761">
    <property type="term" value="P:dihydrofolate biosynthetic process"/>
    <property type="evidence" value="ECO:0000269"/>
    <property type="project" value="EcoCyc"/>
</dbReference>
<dbReference type="GO" id="GO:0046656">
    <property type="term" value="P:folic acid biosynthetic process"/>
    <property type="evidence" value="ECO:0000269"/>
    <property type="project" value="EcoCyc"/>
</dbReference>
<dbReference type="GO" id="GO:0009396">
    <property type="term" value="P:folic acid-containing compound biosynthetic process"/>
    <property type="evidence" value="ECO:0000318"/>
    <property type="project" value="GO_Central"/>
</dbReference>
<dbReference type="GO" id="GO:0006730">
    <property type="term" value="P:one-carbon metabolic process"/>
    <property type="evidence" value="ECO:0007669"/>
    <property type="project" value="UniProtKB-KW"/>
</dbReference>
<dbReference type="GO" id="GO:0046901">
    <property type="term" value="P:tetrahydrofolylpolyglutamate biosynthetic process"/>
    <property type="evidence" value="ECO:0000269"/>
    <property type="project" value="EcoCyc"/>
</dbReference>
<dbReference type="FunFam" id="3.40.1190.10:FF:000004">
    <property type="entry name" value="Dihydrofolate synthase/folylpolyglutamate synthase"/>
    <property type="match status" value="1"/>
</dbReference>
<dbReference type="FunFam" id="3.90.190.20:FF:000005">
    <property type="entry name" value="Dihydrofolate synthase/folylpolyglutamate synthase"/>
    <property type="match status" value="1"/>
</dbReference>
<dbReference type="Gene3D" id="3.90.190.20">
    <property type="entry name" value="Mur ligase, C-terminal domain"/>
    <property type="match status" value="1"/>
</dbReference>
<dbReference type="Gene3D" id="3.40.1190.10">
    <property type="entry name" value="Mur-like, catalytic domain"/>
    <property type="match status" value="1"/>
</dbReference>
<dbReference type="InterPro" id="IPR001645">
    <property type="entry name" value="Folylpolyglutamate_synth"/>
</dbReference>
<dbReference type="InterPro" id="IPR018109">
    <property type="entry name" value="Folylpolyglutamate_synth_CS"/>
</dbReference>
<dbReference type="InterPro" id="IPR036565">
    <property type="entry name" value="Mur-like_cat_sf"/>
</dbReference>
<dbReference type="InterPro" id="IPR004101">
    <property type="entry name" value="Mur_ligase_C"/>
</dbReference>
<dbReference type="InterPro" id="IPR036615">
    <property type="entry name" value="Mur_ligase_C_dom_sf"/>
</dbReference>
<dbReference type="InterPro" id="IPR013221">
    <property type="entry name" value="Mur_ligase_cen"/>
</dbReference>
<dbReference type="NCBIfam" id="TIGR01499">
    <property type="entry name" value="folC"/>
    <property type="match status" value="1"/>
</dbReference>
<dbReference type="NCBIfam" id="NF008101">
    <property type="entry name" value="PRK10846.1"/>
    <property type="match status" value="1"/>
</dbReference>
<dbReference type="PANTHER" id="PTHR11136:SF0">
    <property type="entry name" value="DIHYDROFOLATE SYNTHETASE-RELATED"/>
    <property type="match status" value="1"/>
</dbReference>
<dbReference type="PANTHER" id="PTHR11136">
    <property type="entry name" value="FOLYLPOLYGLUTAMATE SYNTHASE-RELATED"/>
    <property type="match status" value="1"/>
</dbReference>
<dbReference type="Pfam" id="PF02875">
    <property type="entry name" value="Mur_ligase_C"/>
    <property type="match status" value="1"/>
</dbReference>
<dbReference type="Pfam" id="PF08245">
    <property type="entry name" value="Mur_ligase_M"/>
    <property type="match status" value="1"/>
</dbReference>
<dbReference type="PIRSF" id="PIRSF001563">
    <property type="entry name" value="Folylpolyglu_synth"/>
    <property type="match status" value="1"/>
</dbReference>
<dbReference type="SUPFAM" id="SSF53623">
    <property type="entry name" value="MurD-like peptide ligases, catalytic domain"/>
    <property type="match status" value="1"/>
</dbReference>
<dbReference type="SUPFAM" id="SSF53244">
    <property type="entry name" value="MurD-like peptide ligases, peptide-binding domain"/>
    <property type="match status" value="1"/>
</dbReference>
<dbReference type="PROSITE" id="PS01011">
    <property type="entry name" value="FOLYLPOLYGLU_SYNT_1"/>
    <property type="match status" value="1"/>
</dbReference>
<dbReference type="PROSITE" id="PS01012">
    <property type="entry name" value="FOLYLPOLYGLU_SYNT_2"/>
    <property type="match status" value="1"/>
</dbReference>
<reference key="1">
    <citation type="journal article" date="1987" name="J. Biol. Chem.">
        <title>Primary structure of the Escherichia coli folC gene and its folylpolyglutamate synthetase-dihydrofolate synthetase product and regulation of expression by an upstream gene.</title>
        <authorList>
            <person name="Bognar A.L."/>
            <person name="Osborne C."/>
            <person name="Shane B."/>
        </authorList>
    </citation>
    <scope>NUCLEOTIDE SEQUENCE [GENOMIC DNA]</scope>
</reference>
<reference key="2">
    <citation type="journal article" date="1987" name="J. Biol. Chem.">
        <title>The hisT-purF region of the Escherichia coli K-12 chromosome. Identification of additional genes of the hisT and purF operons.</title>
        <authorList>
            <person name="Nonet M.L."/>
            <person name="Marvel C.C."/>
            <person name="Tolan D.R."/>
        </authorList>
    </citation>
    <scope>NUCLEOTIDE SEQUENCE [GENOMIC DNA]</scope>
    <source>
        <strain>K12</strain>
    </source>
</reference>
<reference key="3">
    <citation type="journal article" date="1997" name="DNA Res.">
        <title>Construction of a contiguous 874-kb sequence of the Escherichia coli-K12 genome corresponding to 50.0-68.8 min on the linkage map and analysis of its sequence features.</title>
        <authorList>
            <person name="Yamamoto Y."/>
            <person name="Aiba H."/>
            <person name="Baba T."/>
            <person name="Hayashi K."/>
            <person name="Inada T."/>
            <person name="Isono K."/>
            <person name="Itoh T."/>
            <person name="Kimura S."/>
            <person name="Kitagawa M."/>
            <person name="Makino K."/>
            <person name="Miki T."/>
            <person name="Mitsuhashi N."/>
            <person name="Mizobuchi K."/>
            <person name="Mori H."/>
            <person name="Nakade S."/>
            <person name="Nakamura Y."/>
            <person name="Nashimoto H."/>
            <person name="Oshima T."/>
            <person name="Oyama S."/>
            <person name="Saito N."/>
            <person name="Sampei G."/>
            <person name="Satoh Y."/>
            <person name="Sivasundaram S."/>
            <person name="Tagami H."/>
            <person name="Takahashi H."/>
            <person name="Takeda J."/>
            <person name="Takemoto K."/>
            <person name="Uehara K."/>
            <person name="Wada C."/>
            <person name="Yamagata S."/>
            <person name="Horiuchi T."/>
        </authorList>
    </citation>
    <scope>NUCLEOTIDE SEQUENCE [LARGE SCALE GENOMIC DNA]</scope>
    <source>
        <strain>K12 / W3110 / ATCC 27325 / DSM 5911</strain>
    </source>
</reference>
<reference key="4">
    <citation type="journal article" date="1997" name="Science">
        <title>The complete genome sequence of Escherichia coli K-12.</title>
        <authorList>
            <person name="Blattner F.R."/>
            <person name="Plunkett G. III"/>
            <person name="Bloch C.A."/>
            <person name="Perna N.T."/>
            <person name="Burland V."/>
            <person name="Riley M."/>
            <person name="Collado-Vides J."/>
            <person name="Glasner J.D."/>
            <person name="Rode C.K."/>
            <person name="Mayhew G.F."/>
            <person name="Gregor J."/>
            <person name="Davis N.W."/>
            <person name="Kirkpatrick H.A."/>
            <person name="Goeden M.A."/>
            <person name="Rose D.J."/>
            <person name="Mau B."/>
            <person name="Shao Y."/>
        </authorList>
    </citation>
    <scope>NUCLEOTIDE SEQUENCE [LARGE SCALE GENOMIC DNA]</scope>
    <source>
        <strain>K12 / MG1655 / ATCC 47076</strain>
    </source>
</reference>
<reference key="5">
    <citation type="journal article" date="2006" name="Mol. Syst. Biol.">
        <title>Highly accurate genome sequences of Escherichia coli K-12 strains MG1655 and W3110.</title>
        <authorList>
            <person name="Hayashi K."/>
            <person name="Morooka N."/>
            <person name="Yamamoto Y."/>
            <person name="Fujita K."/>
            <person name="Isono K."/>
            <person name="Choi S."/>
            <person name="Ohtsubo E."/>
            <person name="Baba T."/>
            <person name="Wanner B.L."/>
            <person name="Mori H."/>
            <person name="Horiuchi T."/>
        </authorList>
    </citation>
    <scope>NUCLEOTIDE SEQUENCE [LARGE SCALE GENOMIC DNA]</scope>
    <source>
        <strain>K12 / W3110 / ATCC 27325 / DSM 5911</strain>
    </source>
</reference>
<reference key="6">
    <citation type="journal article" date="1985" name="J. Biol. Chem.">
        <title>Folylpoly-gamma-glutamate synthetase-dihydrofolate synthetase. Cloning and high expression of the Escherichia coli folC gene and purification and properties of the gene product.</title>
        <authorList>
            <person name="Bognar A.L."/>
            <person name="Osborne C."/>
            <person name="Shane B."/>
            <person name="Singer S.C."/>
            <person name="Ferone R."/>
        </authorList>
    </citation>
    <scope>FUNCTION</scope>
    <scope>CATALYTIC ACTIVITY</scope>
    <scope>BIOPHYSICOCHEMICAL PROPERTIES</scope>
    <scope>SUBUNIT</scope>
    <scope>PATHWAY</scope>
    <source>
        <strain>K12</strain>
    </source>
</reference>
<reference key="7">
    <citation type="journal article" date="1991" name="Arch. Biochem. Biophys.">
        <title>Mutagenesis of the folC gene encoding folylpolyglutamate synthetase-dihydrofolate synthetase in Escherichia coli.</title>
        <authorList>
            <person name="Kimlova L.J."/>
            <person name="Pyne C."/>
            <person name="Keshavjee K."/>
            <person name="Huy J."/>
            <person name="Beebakhee G."/>
            <person name="Bognar A.L."/>
        </authorList>
    </citation>
    <scope>FUNCTION</scope>
    <scope>CATALYTIC ACTIVITY</scope>
    <scope>BIOPHYSICOCHEMICAL PROPERTIES</scope>
    <scope>MUTAGENESIS VIA PROGRESSIVE DELETION FROM N- AND C-TER</scope>
</reference>
<reference key="8">
    <citation type="journal article" date="2008" name="Biochemistry">
        <title>Mutagenesis of folylpolyglutamate synthetase indicates that dihydropteroate and tetrahydrofolate bind to the same site.</title>
        <authorList>
            <person name="Sheng Y."/>
            <person name="Khanam N."/>
            <person name="Tsaksis Y."/>
            <person name="Shi X.M."/>
            <person name="Lu Q.S."/>
            <person name="Bognar A.L."/>
        </authorList>
    </citation>
    <scope>FUNCTION</scope>
    <scope>MUTAGENESIS OF THR-122; ASP-154 AND ALA-155</scope>
    <scope>CHIMERA PROTEINS</scope>
    <scope>CATALYTIC ACTIVITY</scope>
    <scope>BIOPHYSICOCHEMICAL PROPERTIES</scope>
    <scope>DOMAIN</scope>
</reference>
<reference key="9">
    <citation type="journal article" date="2005" name="J. Biol. Chem.">
        <title>Escherichia coli FolC structure reveals an unexpected dihydrofolate binding site providing an attractive target for anti-microbial therapy.</title>
        <authorList>
            <person name="Mathieu M."/>
            <person name="Debousker G."/>
            <person name="Vincent S."/>
            <person name="Viviani F."/>
            <person name="Bamas-Jacques N."/>
            <person name="Mikol V."/>
        </authorList>
    </citation>
    <scope>X-RAY CRYSTALLOGRAPHY (1.82 ANGSTROMS) IN COMPLEXES WITH MAGNESIUM; ADP AND PHOSPHORYLATED DIHYDROPTEROATE</scope>
    <scope>COFACTOR</scope>
    <scope>CARBOXYLATION AT LYS-188</scope>
    <scope>REACTION MECHANISM</scope>
</reference>
<gene>
    <name evidence="7" type="primary">folC</name>
    <name type="synonym">dedC</name>
    <name type="ordered locus">b2315</name>
    <name type="ordered locus">JW2312</name>
</gene>
<sequence>MIIKRTPQAASPLASWLSYLENLHSKTIDLGLERVSLVAARLGVLKPAPFVFTVAGTNGKGTTCRTLESILMAAGYKVGVYSSPHLVRYTERVRVQGQELPESAHTASFAEIESARGDISLTYFEYGTLSALWLFKQAQLDVVILEVGLGGRLDATNIVDADVAVVTSIALDHTDWLGPDRESIGREKAGIFRSEKPAIVGEPEMPSTIADVAQEKGALLQRRGVEWNYSVTDHDWAFSDAHGTLENLPLPLVPQPNAATALAALRASGLEVSENAIRDGIASAILPGRFQIVSESPRVIFDVAHNPHAAEYLTGRMKALPKNGRVLAVIGMLHDKDIAGTLAWLKSVVDDWYCAPLEGPRGATAEQLLEHLGNGKSFDSVAQAWDAAMADAKAEDTVLVCGSFHTVAHVMEVIDARRSGGK</sequence>